<organism>
    <name type="scientific">Hypsiprymnodon moschatus</name>
    <name type="common">Musky rat kangaroo</name>
    <dbReference type="NCBI Taxonomy" id="65631"/>
    <lineage>
        <taxon>Eukaryota</taxon>
        <taxon>Metazoa</taxon>
        <taxon>Chordata</taxon>
        <taxon>Craniata</taxon>
        <taxon>Vertebrata</taxon>
        <taxon>Euteleostomi</taxon>
        <taxon>Mammalia</taxon>
        <taxon>Metatheria</taxon>
        <taxon>Diprotodontia</taxon>
        <taxon>Potoroidae</taxon>
        <taxon>Hypsiprymnodon</taxon>
    </lineage>
</organism>
<dbReference type="EMBL" id="AF187545">
    <property type="protein sequence ID" value="AAG27962.1"/>
    <property type="molecule type" value="Genomic_DNA"/>
</dbReference>
<dbReference type="GO" id="GO:0000786">
    <property type="term" value="C:nucleosome"/>
    <property type="evidence" value="ECO:0007669"/>
    <property type="project" value="UniProtKB-KW"/>
</dbReference>
<dbReference type="GO" id="GO:0005634">
    <property type="term" value="C:nucleus"/>
    <property type="evidence" value="ECO:0007669"/>
    <property type="project" value="UniProtKB-SubCell"/>
</dbReference>
<dbReference type="GO" id="GO:0003677">
    <property type="term" value="F:DNA binding"/>
    <property type="evidence" value="ECO:0007669"/>
    <property type="project" value="UniProtKB-KW"/>
</dbReference>
<dbReference type="GO" id="GO:0030261">
    <property type="term" value="P:chromosome condensation"/>
    <property type="evidence" value="ECO:0007669"/>
    <property type="project" value="UniProtKB-KW"/>
</dbReference>
<dbReference type="GO" id="GO:0035092">
    <property type="term" value="P:sperm DNA condensation"/>
    <property type="evidence" value="ECO:0007669"/>
    <property type="project" value="InterPro"/>
</dbReference>
<dbReference type="InterPro" id="IPR000221">
    <property type="entry name" value="Protamine_P1"/>
</dbReference>
<dbReference type="PROSITE" id="PS00048">
    <property type="entry name" value="PROTAMINE_P1"/>
    <property type="match status" value="1"/>
</dbReference>
<evidence type="ECO:0000256" key="1">
    <source>
        <dbReference type="SAM" id="MobiDB-lite"/>
    </source>
</evidence>
<evidence type="ECO:0000305" key="2"/>
<feature type="chain" id="PRO_0000191484" description="Sperm protamine P1">
    <location>
        <begin position="1"/>
        <end position="64"/>
    </location>
</feature>
<feature type="region of interest" description="Disordered" evidence="1">
    <location>
        <begin position="1"/>
        <end position="64"/>
    </location>
</feature>
<protein>
    <recommendedName>
        <fullName>Sperm protamine P1</fullName>
    </recommendedName>
</protein>
<accession>Q9GLQ1</accession>
<reference key="1">
    <citation type="journal article" date="2000" name="J. Mammal. Evol.">
        <title>Intergeneric relationships among Macropodoidea (Metatheria: Diprotodontia) and the chronicle of kangaroo evolution.</title>
        <authorList>
            <person name="Burk A."/>
            <person name="Springer M.S."/>
        </authorList>
    </citation>
    <scope>NUCLEOTIDE SEQUENCE [GENOMIC DNA]</scope>
</reference>
<sequence>MARYRHSRSRSRSRYRRRRRRRSRYRGRRRRYRRSRRRRRSRRGRRGYYRRRRYSRRRRRRYYY</sequence>
<keyword id="KW-0158">Chromosome</keyword>
<keyword id="KW-0217">Developmental protein</keyword>
<keyword id="KW-0221">Differentiation</keyword>
<keyword id="KW-0226">DNA condensation</keyword>
<keyword id="KW-0238">DNA-binding</keyword>
<keyword id="KW-0544">Nucleosome core</keyword>
<keyword id="KW-0539">Nucleus</keyword>
<keyword id="KW-0744">Spermatogenesis</keyword>
<gene>
    <name type="primary">PRM1</name>
</gene>
<comment type="function">
    <text>Protamines substitute for histones in the chromatin of sperm during the haploid phase of spermatogenesis. They compact sperm DNA into a highly condensed, stable and inactive complex.</text>
</comment>
<comment type="subcellular location">
    <subcellularLocation>
        <location>Nucleus</location>
    </subcellularLocation>
    <subcellularLocation>
        <location>Chromosome</location>
    </subcellularLocation>
</comment>
<comment type="tissue specificity">
    <text>Testis.</text>
</comment>
<comment type="similarity">
    <text evidence="2">Belongs to the protamine P1 family.</text>
</comment>
<name>HSP1_HYPMS</name>
<proteinExistence type="evidence at transcript level"/>